<keyword id="KW-1017">Isopeptide bond</keyword>
<keyword id="KW-0507">mRNA processing</keyword>
<keyword id="KW-0508">mRNA splicing</keyword>
<keyword id="KW-0539">Nucleus</keyword>
<keyword id="KW-0597">Phosphoprotein</keyword>
<keyword id="KW-1185">Reference proteome</keyword>
<keyword id="KW-0747">Spliceosome</keyword>
<keyword id="KW-0832">Ubl conjugation</keyword>
<evidence type="ECO:0000250" key="1">
    <source>
        <dbReference type="UniProtKB" id="O43395"/>
    </source>
</evidence>
<evidence type="ECO:0000255" key="2">
    <source>
        <dbReference type="PROSITE-ProRule" id="PRU00627"/>
    </source>
</evidence>
<evidence type="ECO:0000256" key="3">
    <source>
        <dbReference type="SAM" id="MobiDB-lite"/>
    </source>
</evidence>
<evidence type="ECO:0000305" key="4"/>
<evidence type="ECO:0007744" key="5">
    <source>
    </source>
</evidence>
<comment type="function">
    <text evidence="1">Plays a role in pre-mRNA splicing as component of the U4/U6-U5 tri-snRNP complex that is involved in spliceosome assembly, and as component of the precatalytic spliceosome (spliceosome B complex).</text>
</comment>
<comment type="subunit">
    <text evidence="1">Component of the precatalytic spliceosome (spliceosome B complex) (By similarity). Component of the U4/U6-U5 tri-snRNP complex, a building block of the precatalytic spliceosome (spliceosome B complex) (By similarity). The U4/U6-U5 tri-snRNP complex is composed of the U4, U6 and U5 snRNAs and at least PRPF3, PRPF4, PRPF6, PRPF8, PRPF31, SNRNP200, TXNL4A, SNRNP40, SNRPB, SNRPD1, SNRPD2, SNRPD3, SNRPE, SNRPF, SNRPG, DDX23, CD2BP2, PPIH, SNU13, EFTUD2, SART1 and USP39, plus LSM2, LSM3, LSM4, LSM5, LSM6, LSM7 and LSM8 (By similarity). Interacts directly with PRPF4 (By similarity). Part of a heteromeric complex containing PPIH, PRPF3 and PRPF4 that is stable in the absence of RNA (By similarity). Interacts with SART3; the interaction is direct and recruits the deubiquitinase USP4 to PRPF3 (By similarity). Interacts with PRPF19 (By similarity). Interacts ('Lys-63'-linked polyubiquitinated) with PRPF8 (via the MPN (JAB/Mov34) domain); may stabilize the U4/U6-U5 tri-snRNP complex (By similarity). Interacts with ERCC6 (By similarity).</text>
</comment>
<comment type="subcellular location">
    <subcellularLocation>
        <location evidence="1">Nucleus</location>
    </subcellularLocation>
    <subcellularLocation>
        <location evidence="2">Nucleus speckle</location>
    </subcellularLocation>
</comment>
<comment type="PTM">
    <text evidence="1">Ubiquitinated. Undergoes 'Lys-63'-linked polyubiquitination by PRPF19 and deubiquitination by USP4. 'Lys-63'-linked ubiquitination increases the affinity for PRPF8 and may regulate the assembly of the U4/U6-U5 tri-snRNP complex.</text>
</comment>
<gene>
    <name type="primary">Prpf3</name>
</gene>
<proteinExistence type="evidence at protein level"/>
<accession>Q922U1</accession>
<accession>Q3TJH4</accession>
<accession>Q9D6C6</accession>
<organism>
    <name type="scientific">Mus musculus</name>
    <name type="common">Mouse</name>
    <dbReference type="NCBI Taxonomy" id="10090"/>
    <lineage>
        <taxon>Eukaryota</taxon>
        <taxon>Metazoa</taxon>
        <taxon>Chordata</taxon>
        <taxon>Craniata</taxon>
        <taxon>Vertebrata</taxon>
        <taxon>Euteleostomi</taxon>
        <taxon>Mammalia</taxon>
        <taxon>Eutheria</taxon>
        <taxon>Euarchontoglires</taxon>
        <taxon>Glires</taxon>
        <taxon>Rodentia</taxon>
        <taxon>Myomorpha</taxon>
        <taxon>Muroidea</taxon>
        <taxon>Muridae</taxon>
        <taxon>Murinae</taxon>
        <taxon>Mus</taxon>
        <taxon>Mus</taxon>
    </lineage>
</organism>
<dbReference type="EMBL" id="AK014398">
    <property type="protein sequence ID" value="BAB29324.1"/>
    <property type="molecule type" value="mRNA"/>
</dbReference>
<dbReference type="EMBL" id="AK088194">
    <property type="protein sequence ID" value="BAC40202.1"/>
    <property type="molecule type" value="mRNA"/>
</dbReference>
<dbReference type="EMBL" id="AK167435">
    <property type="protein sequence ID" value="BAE39521.1"/>
    <property type="molecule type" value="mRNA"/>
</dbReference>
<dbReference type="EMBL" id="BC006782">
    <property type="protein sequence ID" value="AAH06782.1"/>
    <property type="molecule type" value="mRNA"/>
</dbReference>
<dbReference type="CCDS" id="CCDS17621.1"/>
<dbReference type="RefSeq" id="NP_001303680.1">
    <property type="nucleotide sequence ID" value="NM_001316751.2"/>
</dbReference>
<dbReference type="RefSeq" id="NP_081817.2">
    <property type="nucleotide sequence ID" value="NM_027541.4"/>
</dbReference>
<dbReference type="SMR" id="Q922U1"/>
<dbReference type="BioGRID" id="214242">
    <property type="interactions" value="70"/>
</dbReference>
<dbReference type="FunCoup" id="Q922U1">
    <property type="interactions" value="4733"/>
</dbReference>
<dbReference type="IntAct" id="Q922U1">
    <property type="interactions" value="21"/>
</dbReference>
<dbReference type="STRING" id="10090.ENSMUSP00000015892"/>
<dbReference type="iPTMnet" id="Q922U1"/>
<dbReference type="PhosphoSitePlus" id="Q922U1"/>
<dbReference type="jPOST" id="Q922U1"/>
<dbReference type="PaxDb" id="10090-ENSMUSP00000015892"/>
<dbReference type="PeptideAtlas" id="Q922U1"/>
<dbReference type="ProteomicsDB" id="291564"/>
<dbReference type="Pumba" id="Q922U1"/>
<dbReference type="Antibodypedia" id="20281">
    <property type="antibodies" value="189 antibodies from 31 providers"/>
</dbReference>
<dbReference type="DNASU" id="70767"/>
<dbReference type="Ensembl" id="ENSMUST00000015892.14">
    <property type="protein sequence ID" value="ENSMUSP00000015892.8"/>
    <property type="gene ID" value="ENSMUSG00000015748.14"/>
</dbReference>
<dbReference type="Ensembl" id="ENSMUST00000161476.8">
    <property type="protein sequence ID" value="ENSMUSP00000124950.2"/>
    <property type="gene ID" value="ENSMUSG00000015748.14"/>
</dbReference>
<dbReference type="GeneID" id="70767"/>
<dbReference type="KEGG" id="mmu:70767"/>
<dbReference type="UCSC" id="uc008qlf.1">
    <property type="organism name" value="mouse"/>
</dbReference>
<dbReference type="AGR" id="MGI:1918017"/>
<dbReference type="CTD" id="9129"/>
<dbReference type="MGI" id="MGI:1918017">
    <property type="gene designation" value="Prpf3"/>
</dbReference>
<dbReference type="VEuPathDB" id="HostDB:ENSMUSG00000015748"/>
<dbReference type="eggNOG" id="KOG2769">
    <property type="taxonomic scope" value="Eukaryota"/>
</dbReference>
<dbReference type="GeneTree" id="ENSGT00390000011497"/>
<dbReference type="HOGENOM" id="CLU_015750_3_0_1"/>
<dbReference type="InParanoid" id="Q922U1"/>
<dbReference type="OMA" id="NPQHRFK"/>
<dbReference type="OrthoDB" id="10264544at2759"/>
<dbReference type="PhylomeDB" id="Q922U1"/>
<dbReference type="TreeFam" id="TF313082"/>
<dbReference type="Reactome" id="R-MMU-72163">
    <property type="pathway name" value="mRNA Splicing - Major Pathway"/>
</dbReference>
<dbReference type="BioGRID-ORCS" id="70767">
    <property type="hits" value="17 hits in 81 CRISPR screens"/>
</dbReference>
<dbReference type="ChiTaRS" id="Prpf3">
    <property type="organism name" value="mouse"/>
</dbReference>
<dbReference type="PRO" id="PR:Q922U1"/>
<dbReference type="Proteomes" id="UP000000589">
    <property type="component" value="Chromosome 3"/>
</dbReference>
<dbReference type="RNAct" id="Q922U1">
    <property type="molecule type" value="protein"/>
</dbReference>
<dbReference type="Bgee" id="ENSMUSG00000015748">
    <property type="expression patterns" value="Expressed in embryonic post-anal tail and 226 other cell types or tissues"/>
</dbReference>
<dbReference type="ExpressionAtlas" id="Q922U1">
    <property type="expression patterns" value="baseline and differential"/>
</dbReference>
<dbReference type="GO" id="GO:0015030">
    <property type="term" value="C:Cajal body"/>
    <property type="evidence" value="ECO:0007669"/>
    <property type="project" value="Ensembl"/>
</dbReference>
<dbReference type="GO" id="GO:0005829">
    <property type="term" value="C:cytosol"/>
    <property type="evidence" value="ECO:0007669"/>
    <property type="project" value="Ensembl"/>
</dbReference>
<dbReference type="GO" id="GO:0016607">
    <property type="term" value="C:nuclear speck"/>
    <property type="evidence" value="ECO:0007669"/>
    <property type="project" value="UniProtKB-SubCell"/>
</dbReference>
<dbReference type="GO" id="GO:0005634">
    <property type="term" value="C:nucleus"/>
    <property type="evidence" value="ECO:0000250"/>
    <property type="project" value="UniProtKB"/>
</dbReference>
<dbReference type="GO" id="GO:0071005">
    <property type="term" value="C:U2-type precatalytic spliceosome"/>
    <property type="evidence" value="ECO:0007669"/>
    <property type="project" value="Ensembl"/>
</dbReference>
<dbReference type="GO" id="GO:0046540">
    <property type="term" value="C:U4/U6 x U5 tri-snRNP complex"/>
    <property type="evidence" value="ECO:0000250"/>
    <property type="project" value="UniProtKB"/>
</dbReference>
<dbReference type="GO" id="GO:0042802">
    <property type="term" value="F:identical protein binding"/>
    <property type="evidence" value="ECO:0007669"/>
    <property type="project" value="Ensembl"/>
</dbReference>
<dbReference type="GO" id="GO:0000398">
    <property type="term" value="P:mRNA splicing, via spliceosome"/>
    <property type="evidence" value="ECO:0000250"/>
    <property type="project" value="UniProtKB"/>
</dbReference>
<dbReference type="GO" id="GO:0000244">
    <property type="term" value="P:spliceosomal tri-snRNP complex assembly"/>
    <property type="evidence" value="ECO:0000250"/>
    <property type="project" value="UniProtKB"/>
</dbReference>
<dbReference type="CDD" id="cd24162">
    <property type="entry name" value="Prp3_C"/>
    <property type="match status" value="1"/>
</dbReference>
<dbReference type="FunFam" id="1.20.1390.10:FF:000003">
    <property type="entry name" value="U4/U6 small nuclear ribonucleoprotein Prp3"/>
    <property type="match status" value="1"/>
</dbReference>
<dbReference type="Gene3D" id="1.20.1390.10">
    <property type="entry name" value="PWI domain"/>
    <property type="match status" value="1"/>
</dbReference>
<dbReference type="InterPro" id="IPR013881">
    <property type="entry name" value="Pre-mRNA_splic_Prp3_dom"/>
</dbReference>
<dbReference type="InterPro" id="IPR027104">
    <property type="entry name" value="Prp3"/>
</dbReference>
<dbReference type="InterPro" id="IPR010541">
    <property type="entry name" value="Prp3_C"/>
</dbReference>
<dbReference type="InterPro" id="IPR002483">
    <property type="entry name" value="PWI_dom"/>
</dbReference>
<dbReference type="InterPro" id="IPR036483">
    <property type="entry name" value="PWI_dom_sf"/>
</dbReference>
<dbReference type="PANTHER" id="PTHR14212">
    <property type="entry name" value="U4/U6-ASSOCIATED RNA SPLICING FACTOR-RELATED"/>
    <property type="match status" value="1"/>
</dbReference>
<dbReference type="PANTHER" id="PTHR14212:SF0">
    <property type="entry name" value="U4_U6 SMALL NUCLEAR RIBONUCLEOPROTEIN PRP3"/>
    <property type="match status" value="1"/>
</dbReference>
<dbReference type="Pfam" id="PF08572">
    <property type="entry name" value="PRP3"/>
    <property type="match status" value="1"/>
</dbReference>
<dbReference type="Pfam" id="PF06544">
    <property type="entry name" value="Prp3_C"/>
    <property type="match status" value="1"/>
</dbReference>
<dbReference type="Pfam" id="PF01480">
    <property type="entry name" value="PWI"/>
    <property type="match status" value="1"/>
</dbReference>
<dbReference type="SMART" id="SM00311">
    <property type="entry name" value="PWI"/>
    <property type="match status" value="1"/>
</dbReference>
<dbReference type="SUPFAM" id="SSF101233">
    <property type="entry name" value="PWI domain"/>
    <property type="match status" value="1"/>
</dbReference>
<dbReference type="PROSITE" id="PS51025">
    <property type="entry name" value="PWI"/>
    <property type="match status" value="1"/>
</dbReference>
<sequence>MALSKRELDELKPWIEKTVKRVLGFSEPTVVTAALNCVGKGMDKKKAADHLKPFLDDSTLRFVDKLFEAVEEGRSSRHSKSSSDRSRKRELKEVFGDDSEISKESSGVKKRRIPRFEEVEEEPEVIPGPPSESPGMLTKLQIKQMMEAATRQIEERKKQLSFISPPAPQPKTPSSSQPERLPIGNTIQPSQAATFMNDAIEKARKAAELQARIQAQLALKPGLIGNANMVGLANLHAMGIAPPKVELKDQTKPTPLILDEQGRTVDATGKEVELTHRMPTLKANIRAVKREQFKQQLKEKPSEDMESNTFFDPRVSIAPSQRQRRTFKFHDKGKFEKIAQRLRTKAQLEKLQAEISQAARKTGIHTSTRLALIAPKKELKEGDIPEIEWWDSYIIPNGFDLTEENPKREDYFGITNLVEHPAQLNPPVDNDTPVTLGVYLTKKEQKKLRRQTRREAQKELQEKVRLGLTPPPEPKVRISNLMRVLGTEAVQDPTKVEAHVRAQMAKRQKAHEEANAARKLTAEQRKVKKIKKLKEDISQGVHISVYRVRNLSNPAKKFKIEANAGQLYLTGVVVLHKDVNVVVVEGGPKAQKKFKRLMLHRIKWDEQTSNTKGDDDEESDEEAVKKTNKCVLVWEGTAKDRSFGEMKFKQCPTENMAREHFKKHGAEHYWDLALSESVLESTD</sequence>
<protein>
    <recommendedName>
        <fullName>U4/U6 small nuclear ribonucleoprotein Prp3</fullName>
    </recommendedName>
    <alternativeName>
        <fullName>Pre-mRNA-splicing factor 3</fullName>
    </alternativeName>
</protein>
<name>PRPF3_MOUSE</name>
<feature type="chain" id="PRO_0000097045" description="U4/U6 small nuclear ribonucleoprotein Prp3">
    <location>
        <begin position="1"/>
        <end position="683"/>
    </location>
</feature>
<feature type="domain" description="PWI" evidence="2">
    <location>
        <begin position="1"/>
        <end position="87"/>
    </location>
</feature>
<feature type="region of interest" description="Disordered" evidence="3">
    <location>
        <begin position="73"/>
        <end position="135"/>
    </location>
</feature>
<feature type="region of interest" description="Disordered" evidence="3">
    <location>
        <begin position="161"/>
        <end position="183"/>
    </location>
</feature>
<feature type="region of interest" description="Mediates interaction with SART3" evidence="1">
    <location>
        <begin position="416"/>
        <end position="550"/>
    </location>
</feature>
<feature type="compositionally biased region" description="Basic and acidic residues" evidence="3">
    <location>
        <begin position="73"/>
        <end position="107"/>
    </location>
</feature>
<feature type="modified residue" description="Phosphoserine" evidence="1">
    <location>
        <position position="164"/>
    </location>
</feature>
<feature type="modified residue" description="Phosphoserine" evidence="5">
    <location>
        <position position="619"/>
    </location>
</feature>
<feature type="cross-link" description="Glycyl lysine isopeptide (Lys-Gly) (interchain with G-Cter in SUMO2)" evidence="1">
    <location>
        <position position="139"/>
    </location>
</feature>
<feature type="cross-link" description="Glycyl lysine isopeptide (Lys-Gly) (interchain with G-Cter in SUMO2)" evidence="1">
    <location>
        <position position="244"/>
    </location>
</feature>
<feature type="cross-link" description="Glycyl lysine isopeptide (Lys-Gly) (interchain with G-Cter in SUMO2)" evidence="1">
    <location>
        <position position="252"/>
    </location>
</feature>
<feature type="sequence conflict" description="In Ref. 1; BAB29324." evidence="4" ref="1">
    <original>H</original>
    <variation>L</variation>
    <location>
        <position position="78"/>
    </location>
</feature>
<reference key="1">
    <citation type="journal article" date="2005" name="Science">
        <title>The transcriptional landscape of the mammalian genome.</title>
        <authorList>
            <person name="Carninci P."/>
            <person name="Kasukawa T."/>
            <person name="Katayama S."/>
            <person name="Gough J."/>
            <person name="Frith M.C."/>
            <person name="Maeda N."/>
            <person name="Oyama R."/>
            <person name="Ravasi T."/>
            <person name="Lenhard B."/>
            <person name="Wells C."/>
            <person name="Kodzius R."/>
            <person name="Shimokawa K."/>
            <person name="Bajic V.B."/>
            <person name="Brenner S.E."/>
            <person name="Batalov S."/>
            <person name="Forrest A.R."/>
            <person name="Zavolan M."/>
            <person name="Davis M.J."/>
            <person name="Wilming L.G."/>
            <person name="Aidinis V."/>
            <person name="Allen J.E."/>
            <person name="Ambesi-Impiombato A."/>
            <person name="Apweiler R."/>
            <person name="Aturaliya R.N."/>
            <person name="Bailey T.L."/>
            <person name="Bansal M."/>
            <person name="Baxter L."/>
            <person name="Beisel K.W."/>
            <person name="Bersano T."/>
            <person name="Bono H."/>
            <person name="Chalk A.M."/>
            <person name="Chiu K.P."/>
            <person name="Choudhary V."/>
            <person name="Christoffels A."/>
            <person name="Clutterbuck D.R."/>
            <person name="Crowe M.L."/>
            <person name="Dalla E."/>
            <person name="Dalrymple B.P."/>
            <person name="de Bono B."/>
            <person name="Della Gatta G."/>
            <person name="di Bernardo D."/>
            <person name="Down T."/>
            <person name="Engstrom P."/>
            <person name="Fagiolini M."/>
            <person name="Faulkner G."/>
            <person name="Fletcher C.F."/>
            <person name="Fukushima T."/>
            <person name="Furuno M."/>
            <person name="Futaki S."/>
            <person name="Gariboldi M."/>
            <person name="Georgii-Hemming P."/>
            <person name="Gingeras T.R."/>
            <person name="Gojobori T."/>
            <person name="Green R.E."/>
            <person name="Gustincich S."/>
            <person name="Harbers M."/>
            <person name="Hayashi Y."/>
            <person name="Hensch T.K."/>
            <person name="Hirokawa N."/>
            <person name="Hill D."/>
            <person name="Huminiecki L."/>
            <person name="Iacono M."/>
            <person name="Ikeo K."/>
            <person name="Iwama A."/>
            <person name="Ishikawa T."/>
            <person name="Jakt M."/>
            <person name="Kanapin A."/>
            <person name="Katoh M."/>
            <person name="Kawasawa Y."/>
            <person name="Kelso J."/>
            <person name="Kitamura H."/>
            <person name="Kitano H."/>
            <person name="Kollias G."/>
            <person name="Krishnan S.P."/>
            <person name="Kruger A."/>
            <person name="Kummerfeld S.K."/>
            <person name="Kurochkin I.V."/>
            <person name="Lareau L.F."/>
            <person name="Lazarevic D."/>
            <person name="Lipovich L."/>
            <person name="Liu J."/>
            <person name="Liuni S."/>
            <person name="McWilliam S."/>
            <person name="Madan Babu M."/>
            <person name="Madera M."/>
            <person name="Marchionni L."/>
            <person name="Matsuda H."/>
            <person name="Matsuzawa S."/>
            <person name="Miki H."/>
            <person name="Mignone F."/>
            <person name="Miyake S."/>
            <person name="Morris K."/>
            <person name="Mottagui-Tabar S."/>
            <person name="Mulder N."/>
            <person name="Nakano N."/>
            <person name="Nakauchi H."/>
            <person name="Ng P."/>
            <person name="Nilsson R."/>
            <person name="Nishiguchi S."/>
            <person name="Nishikawa S."/>
            <person name="Nori F."/>
            <person name="Ohara O."/>
            <person name="Okazaki Y."/>
            <person name="Orlando V."/>
            <person name="Pang K.C."/>
            <person name="Pavan W.J."/>
            <person name="Pavesi G."/>
            <person name="Pesole G."/>
            <person name="Petrovsky N."/>
            <person name="Piazza S."/>
            <person name="Reed J."/>
            <person name="Reid J.F."/>
            <person name="Ring B.Z."/>
            <person name="Ringwald M."/>
            <person name="Rost B."/>
            <person name="Ruan Y."/>
            <person name="Salzberg S.L."/>
            <person name="Sandelin A."/>
            <person name="Schneider C."/>
            <person name="Schoenbach C."/>
            <person name="Sekiguchi K."/>
            <person name="Semple C.A."/>
            <person name="Seno S."/>
            <person name="Sessa L."/>
            <person name="Sheng Y."/>
            <person name="Shibata Y."/>
            <person name="Shimada H."/>
            <person name="Shimada K."/>
            <person name="Silva D."/>
            <person name="Sinclair B."/>
            <person name="Sperling S."/>
            <person name="Stupka E."/>
            <person name="Sugiura K."/>
            <person name="Sultana R."/>
            <person name="Takenaka Y."/>
            <person name="Taki K."/>
            <person name="Tammoja K."/>
            <person name="Tan S.L."/>
            <person name="Tang S."/>
            <person name="Taylor M.S."/>
            <person name="Tegner J."/>
            <person name="Teichmann S.A."/>
            <person name="Ueda H.R."/>
            <person name="van Nimwegen E."/>
            <person name="Verardo R."/>
            <person name="Wei C.L."/>
            <person name="Yagi K."/>
            <person name="Yamanishi H."/>
            <person name="Zabarovsky E."/>
            <person name="Zhu S."/>
            <person name="Zimmer A."/>
            <person name="Hide W."/>
            <person name="Bult C."/>
            <person name="Grimmond S.M."/>
            <person name="Teasdale R.D."/>
            <person name="Liu E.T."/>
            <person name="Brusic V."/>
            <person name="Quackenbush J."/>
            <person name="Wahlestedt C."/>
            <person name="Mattick J.S."/>
            <person name="Hume D.A."/>
            <person name="Kai C."/>
            <person name="Sasaki D."/>
            <person name="Tomaru Y."/>
            <person name="Fukuda S."/>
            <person name="Kanamori-Katayama M."/>
            <person name="Suzuki M."/>
            <person name="Aoki J."/>
            <person name="Arakawa T."/>
            <person name="Iida J."/>
            <person name="Imamura K."/>
            <person name="Itoh M."/>
            <person name="Kato T."/>
            <person name="Kawaji H."/>
            <person name="Kawagashira N."/>
            <person name="Kawashima T."/>
            <person name="Kojima M."/>
            <person name="Kondo S."/>
            <person name="Konno H."/>
            <person name="Nakano K."/>
            <person name="Ninomiya N."/>
            <person name="Nishio T."/>
            <person name="Okada M."/>
            <person name="Plessy C."/>
            <person name="Shibata K."/>
            <person name="Shiraki T."/>
            <person name="Suzuki S."/>
            <person name="Tagami M."/>
            <person name="Waki K."/>
            <person name="Watahiki A."/>
            <person name="Okamura-Oho Y."/>
            <person name="Suzuki H."/>
            <person name="Kawai J."/>
            <person name="Hayashizaki Y."/>
        </authorList>
    </citation>
    <scope>NUCLEOTIDE SEQUENCE [LARGE SCALE MRNA]</scope>
    <source>
        <strain>C57BL/6J</strain>
        <strain>NOD</strain>
        <tissue>Placenta</tissue>
        <tissue>Thymus</tissue>
    </source>
</reference>
<reference key="2">
    <citation type="journal article" date="2004" name="Genome Res.">
        <title>The status, quality, and expansion of the NIH full-length cDNA project: the Mammalian Gene Collection (MGC).</title>
        <authorList>
            <consortium name="The MGC Project Team"/>
        </authorList>
    </citation>
    <scope>NUCLEOTIDE SEQUENCE [LARGE SCALE MRNA]</scope>
    <source>
        <tissue>Mammary tumor</tissue>
    </source>
</reference>
<reference key="3">
    <citation type="journal article" date="2010" name="Cell">
        <title>A tissue-specific atlas of mouse protein phosphorylation and expression.</title>
        <authorList>
            <person name="Huttlin E.L."/>
            <person name="Jedrychowski M.P."/>
            <person name="Elias J.E."/>
            <person name="Goswami T."/>
            <person name="Rad R."/>
            <person name="Beausoleil S.A."/>
            <person name="Villen J."/>
            <person name="Haas W."/>
            <person name="Sowa M.E."/>
            <person name="Gygi S.P."/>
        </authorList>
    </citation>
    <scope>PHOSPHORYLATION [LARGE SCALE ANALYSIS] AT SER-619</scope>
    <scope>IDENTIFICATION BY MASS SPECTROMETRY [LARGE SCALE ANALYSIS]</scope>
    <source>
        <tissue>Brain</tissue>
        <tissue>Heart</tissue>
        <tissue>Kidney</tissue>
        <tissue>Lung</tissue>
        <tissue>Pancreas</tissue>
        <tissue>Spleen</tissue>
        <tissue>Testis</tissue>
    </source>
</reference>